<comment type="function">
    <text evidence="1">Required for rescue of stalled ribosomes mediated by trans-translation. Binds to transfer-messenger RNA (tmRNA), required for stable association of tmRNA with ribosomes. tmRNA and SmpB together mimic tRNA shape, replacing the anticodon stem-loop with SmpB. tmRNA is encoded by the ssrA gene; the 2 termini fold to resemble tRNA(Ala) and it encodes a 'tag peptide', a short internal open reading frame. During trans-translation Ala-aminoacylated tmRNA acts like a tRNA, entering the A-site of stalled ribosomes, displacing the stalled mRNA. The ribosome then switches to translate the ORF on the tmRNA; the nascent peptide is terminated with the 'tag peptide' encoded by the tmRNA and targeted for degradation. The ribosome is freed to recommence translation, which seems to be the essential function of trans-translation.</text>
</comment>
<comment type="subcellular location">
    <subcellularLocation>
        <location evidence="1">Cytoplasm</location>
    </subcellularLocation>
    <text evidence="1">The tmRNA-SmpB complex associates with stalled 70S ribosomes.</text>
</comment>
<comment type="similarity">
    <text evidence="1">Belongs to the SmpB family.</text>
</comment>
<gene>
    <name evidence="1" type="primary">smpB</name>
    <name type="ordered locus">Bcen_6078</name>
</gene>
<protein>
    <recommendedName>
        <fullName evidence="1">SsrA-binding protein</fullName>
    </recommendedName>
    <alternativeName>
        <fullName evidence="1">Small protein B</fullName>
    </alternativeName>
</protein>
<dbReference type="EMBL" id="CP000380">
    <property type="protein sequence ID" value="ABF80943.1"/>
    <property type="molecule type" value="Genomic_DNA"/>
</dbReference>
<dbReference type="SMR" id="Q1BHG2"/>
<dbReference type="HOGENOM" id="CLU_108953_3_0_4"/>
<dbReference type="GO" id="GO:0005829">
    <property type="term" value="C:cytosol"/>
    <property type="evidence" value="ECO:0007669"/>
    <property type="project" value="TreeGrafter"/>
</dbReference>
<dbReference type="GO" id="GO:0003723">
    <property type="term" value="F:RNA binding"/>
    <property type="evidence" value="ECO:0007669"/>
    <property type="project" value="UniProtKB-UniRule"/>
</dbReference>
<dbReference type="GO" id="GO:0070929">
    <property type="term" value="P:trans-translation"/>
    <property type="evidence" value="ECO:0007669"/>
    <property type="project" value="UniProtKB-UniRule"/>
</dbReference>
<dbReference type="CDD" id="cd09294">
    <property type="entry name" value="SmpB"/>
    <property type="match status" value="1"/>
</dbReference>
<dbReference type="Gene3D" id="2.40.280.10">
    <property type="match status" value="1"/>
</dbReference>
<dbReference type="HAMAP" id="MF_00023">
    <property type="entry name" value="SmpB"/>
    <property type="match status" value="1"/>
</dbReference>
<dbReference type="InterPro" id="IPR023620">
    <property type="entry name" value="SmpB"/>
</dbReference>
<dbReference type="InterPro" id="IPR000037">
    <property type="entry name" value="SsrA-bd_prot"/>
</dbReference>
<dbReference type="InterPro" id="IPR020081">
    <property type="entry name" value="SsrA-bd_prot_CS"/>
</dbReference>
<dbReference type="NCBIfam" id="NF003843">
    <property type="entry name" value="PRK05422.1"/>
    <property type="match status" value="1"/>
</dbReference>
<dbReference type="NCBIfam" id="TIGR00086">
    <property type="entry name" value="smpB"/>
    <property type="match status" value="1"/>
</dbReference>
<dbReference type="PANTHER" id="PTHR30308:SF2">
    <property type="entry name" value="SSRA-BINDING PROTEIN"/>
    <property type="match status" value="1"/>
</dbReference>
<dbReference type="PANTHER" id="PTHR30308">
    <property type="entry name" value="TMRNA-BINDING COMPONENT OF TRANS-TRANSLATION TAGGING COMPLEX"/>
    <property type="match status" value="1"/>
</dbReference>
<dbReference type="Pfam" id="PF01668">
    <property type="entry name" value="SmpB"/>
    <property type="match status" value="1"/>
</dbReference>
<dbReference type="SUPFAM" id="SSF74982">
    <property type="entry name" value="Small protein B (SmpB)"/>
    <property type="match status" value="1"/>
</dbReference>
<dbReference type="PROSITE" id="PS01317">
    <property type="entry name" value="SSRP"/>
    <property type="match status" value="1"/>
</dbReference>
<accession>Q1BHG2</accession>
<organism>
    <name type="scientific">Burkholderia orbicola (strain AU 1054)</name>
    <dbReference type="NCBI Taxonomy" id="331271"/>
    <lineage>
        <taxon>Bacteria</taxon>
        <taxon>Pseudomonadati</taxon>
        <taxon>Pseudomonadota</taxon>
        <taxon>Betaproteobacteria</taxon>
        <taxon>Burkholderiales</taxon>
        <taxon>Burkholderiaceae</taxon>
        <taxon>Burkholderia</taxon>
        <taxon>Burkholderia cepacia complex</taxon>
        <taxon>Burkholderia orbicola</taxon>
    </lineage>
</organism>
<name>SSRP_BURO1</name>
<sequence length="148" mass="17163">MSIIDNRKAHFDYHIEERYEAGLVLEGWEVKALRAGRGQIKEGYVVVKNAEIFLIGTHISPLPEASTHIKPDPVRTRKLLLHREEIKKLIGKVEQRGYTLVPLNFHYKGGRVKCDIALAKGKKLHDKRETEKKRDWEREKARIMRAGT</sequence>
<evidence type="ECO:0000255" key="1">
    <source>
        <dbReference type="HAMAP-Rule" id="MF_00023"/>
    </source>
</evidence>
<evidence type="ECO:0000256" key="2">
    <source>
        <dbReference type="SAM" id="MobiDB-lite"/>
    </source>
</evidence>
<keyword id="KW-0963">Cytoplasm</keyword>
<keyword id="KW-0694">RNA-binding</keyword>
<reference key="1">
    <citation type="submission" date="2006-05" db="EMBL/GenBank/DDBJ databases">
        <title>Complete sequence of chromosome 3 of Burkholderia cenocepacia AU 1054.</title>
        <authorList>
            <consortium name="US DOE Joint Genome Institute"/>
            <person name="Copeland A."/>
            <person name="Lucas S."/>
            <person name="Lapidus A."/>
            <person name="Barry K."/>
            <person name="Detter J.C."/>
            <person name="Glavina del Rio T."/>
            <person name="Hammon N."/>
            <person name="Israni S."/>
            <person name="Dalin E."/>
            <person name="Tice H."/>
            <person name="Pitluck S."/>
            <person name="Chain P."/>
            <person name="Malfatti S."/>
            <person name="Shin M."/>
            <person name="Vergez L."/>
            <person name="Schmutz J."/>
            <person name="Larimer F."/>
            <person name="Land M."/>
            <person name="Hauser L."/>
            <person name="Kyrpides N."/>
            <person name="Lykidis A."/>
            <person name="LiPuma J.J."/>
            <person name="Konstantinidis K."/>
            <person name="Tiedje J.M."/>
            <person name="Richardson P."/>
        </authorList>
    </citation>
    <scope>NUCLEOTIDE SEQUENCE [LARGE SCALE GENOMIC DNA]</scope>
    <source>
        <strain>AU 1054</strain>
    </source>
</reference>
<feature type="chain" id="PRO_1000002010" description="SsrA-binding protein">
    <location>
        <begin position="1"/>
        <end position="148"/>
    </location>
</feature>
<feature type="region of interest" description="Disordered" evidence="2">
    <location>
        <begin position="129"/>
        <end position="148"/>
    </location>
</feature>
<feature type="compositionally biased region" description="Basic and acidic residues" evidence="2">
    <location>
        <begin position="129"/>
        <end position="142"/>
    </location>
</feature>
<proteinExistence type="inferred from homology"/>